<protein>
    <recommendedName>
        <fullName evidence="4">Triacylglycerol lipase</fullName>
        <ecNumber evidence="6">3.1.1.3</ecNumber>
    </recommendedName>
    <alternativeName>
        <fullName evidence="4">Extracellular lipase</fullName>
    </alternativeName>
    <alternativeName>
        <fullName evidence="4">Lactonizing lipase</fullName>
    </alternativeName>
    <alternativeName>
        <fullName evidence="4">Lipase P</fullName>
    </alternativeName>
    <alternativeName>
        <fullName evidence="1">Triacylglycerol ester hydrolase</fullName>
    </alternativeName>
</protein>
<comment type="function">
    <text evidence="3">Catalyzes the hydrolysis of triacylglycerol. Also able to catalyze, in anhydrous organic solvents, intramolecular transesterification of omega-hydroxyfatty acid esters to form macrocyclic lactones. This biosynthesis is dependent on the chain length of the substrates, and the formation of monomer lactone is maximum with methyl 18-hydroxyoctadecanoate. With shorter substrates, monomer lactone decreases and the formation of diolide (dimer lactone) increases.</text>
</comment>
<comment type="catalytic activity">
    <reaction evidence="6">
        <text>a triacylglycerol + H2O = a diacylglycerol + a fatty acid + H(+)</text>
        <dbReference type="Rhea" id="RHEA:12044"/>
        <dbReference type="ChEBI" id="CHEBI:15377"/>
        <dbReference type="ChEBI" id="CHEBI:15378"/>
        <dbReference type="ChEBI" id="CHEBI:17855"/>
        <dbReference type="ChEBI" id="CHEBI:18035"/>
        <dbReference type="ChEBI" id="CHEBI:28868"/>
        <dbReference type="EC" id="3.1.1.3"/>
    </reaction>
</comment>
<comment type="cofactor">
    <cofactor evidence="1">
        <name>Ca(2+)</name>
        <dbReference type="ChEBI" id="CHEBI:29108"/>
    </cofactor>
    <text evidence="1">Binds 1 Ca(2+) ion per subunit.</text>
</comment>
<comment type="subunit">
    <text evidence="1">Monomer.</text>
</comment>
<comment type="subcellular location">
    <subcellularLocation>
        <location evidence="1">Secreted</location>
    </subcellularLocation>
</comment>
<comment type="similarity">
    <text evidence="5">Belongs to the AB hydrolase superfamily. Pseudomonas lipase family.</text>
</comment>
<accession>P26877</accession>
<evidence type="ECO:0000250" key="1">
    <source>
        <dbReference type="UniProtKB" id="P26876"/>
    </source>
</evidence>
<evidence type="ECO:0000255" key="2"/>
<evidence type="ECO:0000269" key="3">
    <source>
    </source>
</evidence>
<evidence type="ECO:0000303" key="4">
    <source>
    </source>
</evidence>
<evidence type="ECO:0000305" key="5"/>
<evidence type="ECO:0000305" key="6">
    <source>
    </source>
</evidence>
<sequence length="311" mass="32737">MKKKSLLPLGLAIGLASLAASPLIQASTYTQTKYPIVLAHGMLGFDNILGVDYWFGIPSALRRDGAQVYVTEVSQLDTSEVRGEQLLQQVEEIVALSGQPKVNLIGHSHGGPTIRYVAAVRPDLMPSATSVGAPHKGSDTADFLRQIPPGSAGEAVLSGLVNSLGALISFLSSGSAGTQNSLGSLESLNSEGAARFNAKYPQGIPTSACGEGAYKVNGVSYYSWSGSSPLTNFLDPSDAFLGASSLTFKNGTANDGLVGTCSSHLGMVIRDNYRMNHLDEVNQVFGLTSLFETSPVSVYRQHANRLKNASL</sequence>
<proteinExistence type="evidence at protein level"/>
<feature type="signal peptide" evidence="3">
    <location>
        <begin position="1"/>
        <end position="26"/>
    </location>
</feature>
<feature type="chain" id="PRO_0000017746" description="Triacylglycerol lipase">
    <location>
        <begin position="27"/>
        <end position="311"/>
    </location>
</feature>
<feature type="domain" description="AB hydrolase-1" evidence="2">
    <location>
        <begin position="35"/>
        <end position="280"/>
    </location>
</feature>
<feature type="active site" description="Nucleophile" evidence="1">
    <location>
        <position position="108"/>
    </location>
</feature>
<feature type="active site" description="Charge relay system" evidence="1">
    <location>
        <position position="255"/>
    </location>
</feature>
<feature type="active site" description="Charge relay system" evidence="1">
    <location>
        <position position="277"/>
    </location>
</feature>
<feature type="binding site" evidence="1">
    <location>
        <position position="42"/>
    </location>
    <ligand>
        <name>substrate</name>
    </ligand>
</feature>
<feature type="binding site" evidence="1">
    <location>
        <position position="109"/>
    </location>
    <ligand>
        <name>substrate</name>
    </ligand>
</feature>
<feature type="binding site" evidence="1">
    <location>
        <position position="235"/>
    </location>
    <ligand>
        <name>Ca(2+)</name>
        <dbReference type="ChEBI" id="CHEBI:29108"/>
    </ligand>
</feature>
<feature type="binding site" evidence="1">
    <location>
        <position position="279"/>
    </location>
    <ligand>
        <name>Ca(2+)</name>
        <dbReference type="ChEBI" id="CHEBI:29108"/>
    </ligand>
</feature>
<feature type="binding site" evidence="1">
    <location>
        <position position="283"/>
    </location>
    <ligand>
        <name>Ca(2+)</name>
        <dbReference type="ChEBI" id="CHEBI:29108"/>
    </ligand>
</feature>
<feature type="binding site" evidence="1">
    <location>
        <position position="287"/>
    </location>
    <ligand>
        <name>Ca(2+)</name>
        <dbReference type="ChEBI" id="CHEBI:29108"/>
    </ligand>
</feature>
<feature type="disulfide bond" evidence="1">
    <location>
        <begin position="209"/>
        <end position="261"/>
    </location>
</feature>
<name>LIP_PSEU0</name>
<reference key="1">
    <citation type="journal article" date="1991" name="J. Biol. Chem.">
        <title>Purification, characterization, and molecular cloning of lactonizing lipase from Pseudomonas species.</title>
        <authorList>
            <person name="Ihara F."/>
            <person name="Kageyama Y."/>
            <person name="Hirata M."/>
            <person name="Nihira T."/>
            <person name="Yamada Y."/>
        </authorList>
    </citation>
    <scope>NUCLEOTIDE SEQUENCE [GENOMIC DNA]</scope>
    <scope>PROTEIN SEQUENCE OF 27-45</scope>
    <scope>FUNCTION</scope>
    <scope>CATALYTIC ACTIVITY</scope>
    <scope>SUBSTRATE SPECIFICITY</scope>
    <source>
        <strain>109</strain>
    </source>
</reference>
<organism>
    <name type="scientific">Pseudomonas sp. (strain 109)</name>
    <dbReference type="NCBI Taxonomy" id="72584"/>
    <lineage>
        <taxon>Bacteria</taxon>
        <taxon>Pseudomonadati</taxon>
        <taxon>Pseudomonadota</taxon>
    </lineage>
</organism>
<keyword id="KW-0106">Calcium</keyword>
<keyword id="KW-0903">Direct protein sequencing</keyword>
<keyword id="KW-1015">Disulfide bond</keyword>
<keyword id="KW-0378">Hydrolase</keyword>
<keyword id="KW-0442">Lipid degradation</keyword>
<keyword id="KW-0443">Lipid metabolism</keyword>
<keyword id="KW-0479">Metal-binding</keyword>
<keyword id="KW-0964">Secreted</keyword>
<keyword id="KW-0732">Signal</keyword>
<gene>
    <name evidence="4" type="primary">lipL</name>
</gene>
<dbReference type="EC" id="3.1.1.3" evidence="6"/>
<dbReference type="EMBL" id="D10166">
    <property type="protein sequence ID" value="BAA01035.1"/>
    <property type="molecule type" value="Genomic_DNA"/>
</dbReference>
<dbReference type="PIR" id="A40943">
    <property type="entry name" value="A40943"/>
</dbReference>
<dbReference type="SMR" id="P26877"/>
<dbReference type="ESTHER" id="psesp-llipa">
    <property type="family name" value="Bacterial_lip_FamI.1"/>
</dbReference>
<dbReference type="GO" id="GO:0005576">
    <property type="term" value="C:extracellular region"/>
    <property type="evidence" value="ECO:0007669"/>
    <property type="project" value="UniProtKB-SubCell"/>
</dbReference>
<dbReference type="GO" id="GO:0046872">
    <property type="term" value="F:metal ion binding"/>
    <property type="evidence" value="ECO:0007669"/>
    <property type="project" value="UniProtKB-KW"/>
</dbReference>
<dbReference type="GO" id="GO:0004806">
    <property type="term" value="F:triacylglycerol lipase activity"/>
    <property type="evidence" value="ECO:0007669"/>
    <property type="project" value="UniProtKB-EC"/>
</dbReference>
<dbReference type="GO" id="GO:0016042">
    <property type="term" value="P:lipid catabolic process"/>
    <property type="evidence" value="ECO:0007669"/>
    <property type="project" value="UniProtKB-KW"/>
</dbReference>
<dbReference type="FunFam" id="3.40.50.1820:FF:000229">
    <property type="entry name" value="Lactonizing lipase"/>
    <property type="match status" value="1"/>
</dbReference>
<dbReference type="Gene3D" id="3.40.50.1820">
    <property type="entry name" value="alpha/beta hydrolase"/>
    <property type="match status" value="1"/>
</dbReference>
<dbReference type="InterPro" id="IPR000073">
    <property type="entry name" value="AB_hydrolase_1"/>
</dbReference>
<dbReference type="InterPro" id="IPR029058">
    <property type="entry name" value="AB_hydrolase_fold"/>
</dbReference>
<dbReference type="Pfam" id="PF00561">
    <property type="entry name" value="Abhydrolase_1"/>
    <property type="match status" value="1"/>
</dbReference>
<dbReference type="SUPFAM" id="SSF53474">
    <property type="entry name" value="alpha/beta-Hydrolases"/>
    <property type="match status" value="1"/>
</dbReference>
<dbReference type="PROSITE" id="PS00120">
    <property type="entry name" value="LIPASE_SER"/>
    <property type="match status" value="1"/>
</dbReference>